<protein>
    <recommendedName>
        <fullName evidence="1">UDP-N-acetylmuramoyl-L-alanyl-D-glutamate--2,6-diaminopimelate ligase</fullName>
        <ecNumber evidence="1">6.3.2.13</ecNumber>
    </recommendedName>
    <alternativeName>
        <fullName evidence="1">Meso-A2pm-adding enzyme</fullName>
    </alternativeName>
    <alternativeName>
        <fullName evidence="1">Meso-diaminopimelate-adding enzyme</fullName>
    </alternativeName>
    <alternativeName>
        <fullName evidence="1">UDP-MurNAc-L-Ala-D-Glu:meso-diaminopimelate ligase</fullName>
    </alternativeName>
    <alternativeName>
        <fullName evidence="1">UDP-MurNAc-tripeptide synthetase</fullName>
    </alternativeName>
    <alternativeName>
        <fullName evidence="1">UDP-N-acetylmuramyl-tripeptide synthetase</fullName>
    </alternativeName>
</protein>
<keyword id="KW-0067">ATP-binding</keyword>
<keyword id="KW-0131">Cell cycle</keyword>
<keyword id="KW-0132">Cell division</keyword>
<keyword id="KW-0133">Cell shape</keyword>
<keyword id="KW-0961">Cell wall biogenesis/degradation</keyword>
<keyword id="KW-0963">Cytoplasm</keyword>
<keyword id="KW-0436">Ligase</keyword>
<keyword id="KW-0460">Magnesium</keyword>
<keyword id="KW-0547">Nucleotide-binding</keyword>
<keyword id="KW-0573">Peptidoglycan synthesis</keyword>
<keyword id="KW-1185">Reference proteome</keyword>
<comment type="function">
    <text evidence="1">Catalyzes the addition of meso-diaminopimelic acid to the nucleotide precursor UDP-N-acetylmuramoyl-L-alanyl-D-glutamate (UMAG) in the biosynthesis of bacterial cell-wall peptidoglycan.</text>
</comment>
<comment type="catalytic activity">
    <reaction evidence="1">
        <text>UDP-N-acetyl-alpha-D-muramoyl-L-alanyl-D-glutamate + meso-2,6-diaminopimelate + ATP = UDP-N-acetyl-alpha-D-muramoyl-L-alanyl-gamma-D-glutamyl-meso-2,6-diaminopimelate + ADP + phosphate + H(+)</text>
        <dbReference type="Rhea" id="RHEA:23676"/>
        <dbReference type="ChEBI" id="CHEBI:15378"/>
        <dbReference type="ChEBI" id="CHEBI:30616"/>
        <dbReference type="ChEBI" id="CHEBI:43474"/>
        <dbReference type="ChEBI" id="CHEBI:57791"/>
        <dbReference type="ChEBI" id="CHEBI:83900"/>
        <dbReference type="ChEBI" id="CHEBI:83905"/>
        <dbReference type="ChEBI" id="CHEBI:456216"/>
        <dbReference type="EC" id="6.3.2.13"/>
    </reaction>
</comment>
<comment type="cofactor">
    <cofactor evidence="1">
        <name>Mg(2+)</name>
        <dbReference type="ChEBI" id="CHEBI:18420"/>
    </cofactor>
</comment>
<comment type="pathway">
    <text evidence="1">Cell wall biogenesis; peptidoglycan biosynthesis.</text>
</comment>
<comment type="subcellular location">
    <subcellularLocation>
        <location evidence="1">Cytoplasm</location>
    </subcellularLocation>
</comment>
<comment type="PTM">
    <text evidence="1">Carboxylation is probably crucial for Mg(2+) binding and, consequently, for the gamma-phosphate positioning of ATP.</text>
</comment>
<comment type="similarity">
    <text evidence="1">Belongs to the MurCDEF family. MurE subfamily.</text>
</comment>
<gene>
    <name evidence="1" type="primary">murE</name>
    <name type="ordered locus">Amet_2884</name>
</gene>
<sequence length="494" mass="54502">MKLMDLLEEIDTIEIKGEERINIENIYYDSRKVTPNSLFICIEGFQTDGHHFIDQAIKKGAIAIVAQKDMTGLDGVTWVQVKDTRQVMAQLGSTFYGRPSQHLELIGVTGTNGKTSTTYMIKKILENHERKVGLIGTIANWIGNTEVEAQRTTPESIDLQQIFKEMADEKVTECVMEVSSHALALERVAESEFKVGVFTNLTPEHLDFHENIDNYREAKKKLFYLTTVANVINIDDPHGAMIAEEVKKLKPSLITFGIKKQATVMAKNIATTLKDVTFDLVTPVGEARVTVKIPGIFSAYNALASIATSIAIGVPFDVIVQGIQSIPGVPGRFESVLGIKDFSVIVDYAHTPDAIENVIQAAKNVTEHRVITVFGCGGDRDRTKRSVMGEISGSLSDLSVITSDNPRTEDPYKILMMIEAGIKKTKGLYTIIEDRREAIRYAMKEAKKGDIVLIAGKGHEATQQIGSNVIIFDDCGVAREIAKEEGLDDSDIHS</sequence>
<evidence type="ECO:0000255" key="1">
    <source>
        <dbReference type="HAMAP-Rule" id="MF_00208"/>
    </source>
</evidence>
<name>MURE_ALKMQ</name>
<reference key="1">
    <citation type="journal article" date="2016" name="Genome Announc.">
        <title>Complete genome sequence of Alkaliphilus metalliredigens strain QYMF, an alkaliphilic and metal-reducing bacterium isolated from borax-contaminated leachate ponds.</title>
        <authorList>
            <person name="Hwang C."/>
            <person name="Copeland A."/>
            <person name="Lucas S."/>
            <person name="Lapidus A."/>
            <person name="Barry K."/>
            <person name="Detter J.C."/>
            <person name="Glavina Del Rio T."/>
            <person name="Hammon N."/>
            <person name="Israni S."/>
            <person name="Dalin E."/>
            <person name="Tice H."/>
            <person name="Pitluck S."/>
            <person name="Chertkov O."/>
            <person name="Brettin T."/>
            <person name="Bruce D."/>
            <person name="Han C."/>
            <person name="Schmutz J."/>
            <person name="Larimer F."/>
            <person name="Land M.L."/>
            <person name="Hauser L."/>
            <person name="Kyrpides N."/>
            <person name="Mikhailova N."/>
            <person name="Ye Q."/>
            <person name="Zhou J."/>
            <person name="Richardson P."/>
            <person name="Fields M.W."/>
        </authorList>
    </citation>
    <scope>NUCLEOTIDE SEQUENCE [LARGE SCALE GENOMIC DNA]</scope>
    <source>
        <strain>QYMF</strain>
    </source>
</reference>
<dbReference type="EC" id="6.3.2.13" evidence="1"/>
<dbReference type="EMBL" id="CP000724">
    <property type="protein sequence ID" value="ABR49034.1"/>
    <property type="molecule type" value="Genomic_DNA"/>
</dbReference>
<dbReference type="RefSeq" id="WP_012064002.1">
    <property type="nucleotide sequence ID" value="NC_009633.1"/>
</dbReference>
<dbReference type="SMR" id="A6TS66"/>
<dbReference type="STRING" id="293826.Amet_2884"/>
<dbReference type="KEGG" id="amt:Amet_2884"/>
<dbReference type="eggNOG" id="COG0769">
    <property type="taxonomic scope" value="Bacteria"/>
</dbReference>
<dbReference type="HOGENOM" id="CLU_022291_4_1_9"/>
<dbReference type="OrthoDB" id="9800958at2"/>
<dbReference type="UniPathway" id="UPA00219"/>
<dbReference type="Proteomes" id="UP000001572">
    <property type="component" value="Chromosome"/>
</dbReference>
<dbReference type="GO" id="GO:0005737">
    <property type="term" value="C:cytoplasm"/>
    <property type="evidence" value="ECO:0007669"/>
    <property type="project" value="UniProtKB-SubCell"/>
</dbReference>
<dbReference type="GO" id="GO:0005524">
    <property type="term" value="F:ATP binding"/>
    <property type="evidence" value="ECO:0007669"/>
    <property type="project" value="UniProtKB-UniRule"/>
</dbReference>
<dbReference type="GO" id="GO:0000287">
    <property type="term" value="F:magnesium ion binding"/>
    <property type="evidence" value="ECO:0007669"/>
    <property type="project" value="UniProtKB-UniRule"/>
</dbReference>
<dbReference type="GO" id="GO:0008765">
    <property type="term" value="F:UDP-N-acetylmuramoylalanyl-D-glutamate-2,6-diaminopimelate ligase activity"/>
    <property type="evidence" value="ECO:0007669"/>
    <property type="project" value="UniProtKB-UniRule"/>
</dbReference>
<dbReference type="GO" id="GO:0051301">
    <property type="term" value="P:cell division"/>
    <property type="evidence" value="ECO:0007669"/>
    <property type="project" value="UniProtKB-KW"/>
</dbReference>
<dbReference type="GO" id="GO:0071555">
    <property type="term" value="P:cell wall organization"/>
    <property type="evidence" value="ECO:0007669"/>
    <property type="project" value="UniProtKB-KW"/>
</dbReference>
<dbReference type="GO" id="GO:0009252">
    <property type="term" value="P:peptidoglycan biosynthetic process"/>
    <property type="evidence" value="ECO:0007669"/>
    <property type="project" value="UniProtKB-UniRule"/>
</dbReference>
<dbReference type="GO" id="GO:0008360">
    <property type="term" value="P:regulation of cell shape"/>
    <property type="evidence" value="ECO:0007669"/>
    <property type="project" value="UniProtKB-KW"/>
</dbReference>
<dbReference type="Gene3D" id="3.90.190.20">
    <property type="entry name" value="Mur ligase, C-terminal domain"/>
    <property type="match status" value="1"/>
</dbReference>
<dbReference type="Gene3D" id="3.40.1190.10">
    <property type="entry name" value="Mur-like, catalytic domain"/>
    <property type="match status" value="1"/>
</dbReference>
<dbReference type="Gene3D" id="3.40.1390.10">
    <property type="entry name" value="MurE/MurF, N-terminal domain"/>
    <property type="match status" value="1"/>
</dbReference>
<dbReference type="HAMAP" id="MF_00208">
    <property type="entry name" value="MurE"/>
    <property type="match status" value="1"/>
</dbReference>
<dbReference type="InterPro" id="IPR036565">
    <property type="entry name" value="Mur-like_cat_sf"/>
</dbReference>
<dbReference type="InterPro" id="IPR004101">
    <property type="entry name" value="Mur_ligase_C"/>
</dbReference>
<dbReference type="InterPro" id="IPR036615">
    <property type="entry name" value="Mur_ligase_C_dom_sf"/>
</dbReference>
<dbReference type="InterPro" id="IPR013221">
    <property type="entry name" value="Mur_ligase_cen"/>
</dbReference>
<dbReference type="InterPro" id="IPR000713">
    <property type="entry name" value="Mur_ligase_N"/>
</dbReference>
<dbReference type="InterPro" id="IPR035911">
    <property type="entry name" value="MurE/MurF_N"/>
</dbReference>
<dbReference type="InterPro" id="IPR005761">
    <property type="entry name" value="UDP-N-AcMur-Glu-dNH2Pim_ligase"/>
</dbReference>
<dbReference type="NCBIfam" id="TIGR01085">
    <property type="entry name" value="murE"/>
    <property type="match status" value="1"/>
</dbReference>
<dbReference type="NCBIfam" id="NF001124">
    <property type="entry name" value="PRK00139.1-2"/>
    <property type="match status" value="1"/>
</dbReference>
<dbReference type="NCBIfam" id="NF001126">
    <property type="entry name" value="PRK00139.1-4"/>
    <property type="match status" value="1"/>
</dbReference>
<dbReference type="PANTHER" id="PTHR23135">
    <property type="entry name" value="MUR LIGASE FAMILY MEMBER"/>
    <property type="match status" value="1"/>
</dbReference>
<dbReference type="PANTHER" id="PTHR23135:SF4">
    <property type="entry name" value="UDP-N-ACETYLMURAMOYL-L-ALANYL-D-GLUTAMATE--2,6-DIAMINOPIMELATE LIGASE MURE HOMOLOG, CHLOROPLASTIC"/>
    <property type="match status" value="1"/>
</dbReference>
<dbReference type="Pfam" id="PF01225">
    <property type="entry name" value="Mur_ligase"/>
    <property type="match status" value="1"/>
</dbReference>
<dbReference type="Pfam" id="PF02875">
    <property type="entry name" value="Mur_ligase_C"/>
    <property type="match status" value="1"/>
</dbReference>
<dbReference type="Pfam" id="PF08245">
    <property type="entry name" value="Mur_ligase_M"/>
    <property type="match status" value="1"/>
</dbReference>
<dbReference type="SUPFAM" id="SSF53623">
    <property type="entry name" value="MurD-like peptide ligases, catalytic domain"/>
    <property type="match status" value="1"/>
</dbReference>
<dbReference type="SUPFAM" id="SSF53244">
    <property type="entry name" value="MurD-like peptide ligases, peptide-binding domain"/>
    <property type="match status" value="1"/>
</dbReference>
<dbReference type="SUPFAM" id="SSF63418">
    <property type="entry name" value="MurE/MurF N-terminal domain"/>
    <property type="match status" value="1"/>
</dbReference>
<organism>
    <name type="scientific">Alkaliphilus metalliredigens (strain QYMF)</name>
    <dbReference type="NCBI Taxonomy" id="293826"/>
    <lineage>
        <taxon>Bacteria</taxon>
        <taxon>Bacillati</taxon>
        <taxon>Bacillota</taxon>
        <taxon>Clostridia</taxon>
        <taxon>Peptostreptococcales</taxon>
        <taxon>Natronincolaceae</taxon>
        <taxon>Alkaliphilus</taxon>
    </lineage>
</organism>
<proteinExistence type="inferred from homology"/>
<feature type="chain" id="PRO_1000058585" description="UDP-N-acetylmuramoyl-L-alanyl-D-glutamate--2,6-diaminopimelate ligase">
    <location>
        <begin position="1"/>
        <end position="494"/>
    </location>
</feature>
<feature type="short sequence motif" description="Meso-diaminopimelate recognition motif">
    <location>
        <begin position="404"/>
        <end position="407"/>
    </location>
</feature>
<feature type="binding site" evidence="1">
    <location>
        <position position="30"/>
    </location>
    <ligand>
        <name>UDP-N-acetyl-alpha-D-muramoyl-L-alanyl-D-glutamate</name>
        <dbReference type="ChEBI" id="CHEBI:83900"/>
    </ligand>
</feature>
<feature type="binding site" evidence="1">
    <location>
        <begin position="110"/>
        <end position="116"/>
    </location>
    <ligand>
        <name>ATP</name>
        <dbReference type="ChEBI" id="CHEBI:30616"/>
    </ligand>
</feature>
<feature type="binding site" evidence="1">
    <location>
        <begin position="152"/>
        <end position="153"/>
    </location>
    <ligand>
        <name>UDP-N-acetyl-alpha-D-muramoyl-L-alanyl-D-glutamate</name>
        <dbReference type="ChEBI" id="CHEBI:83900"/>
    </ligand>
</feature>
<feature type="binding site" evidence="1">
    <location>
        <position position="179"/>
    </location>
    <ligand>
        <name>UDP-N-acetyl-alpha-D-muramoyl-L-alanyl-D-glutamate</name>
        <dbReference type="ChEBI" id="CHEBI:83900"/>
    </ligand>
</feature>
<feature type="binding site" evidence="1">
    <location>
        <position position="187"/>
    </location>
    <ligand>
        <name>UDP-N-acetyl-alpha-D-muramoyl-L-alanyl-D-glutamate</name>
        <dbReference type="ChEBI" id="CHEBI:83900"/>
    </ligand>
</feature>
<feature type="binding site" evidence="1">
    <location>
        <position position="380"/>
    </location>
    <ligand>
        <name>meso-2,6-diaminopimelate</name>
        <dbReference type="ChEBI" id="CHEBI:57791"/>
    </ligand>
</feature>
<feature type="binding site" evidence="1">
    <location>
        <begin position="404"/>
        <end position="407"/>
    </location>
    <ligand>
        <name>meso-2,6-diaminopimelate</name>
        <dbReference type="ChEBI" id="CHEBI:57791"/>
    </ligand>
</feature>
<feature type="binding site" evidence="1">
    <location>
        <position position="456"/>
    </location>
    <ligand>
        <name>meso-2,6-diaminopimelate</name>
        <dbReference type="ChEBI" id="CHEBI:57791"/>
    </ligand>
</feature>
<feature type="binding site" evidence="1">
    <location>
        <position position="460"/>
    </location>
    <ligand>
        <name>meso-2,6-diaminopimelate</name>
        <dbReference type="ChEBI" id="CHEBI:57791"/>
    </ligand>
</feature>
<feature type="modified residue" description="N6-carboxylysine" evidence="1">
    <location>
        <position position="219"/>
    </location>
</feature>
<accession>A6TS66</accession>